<accession>Q3SWF2</accession>
<gene>
    <name evidence="1" type="primary">hisE</name>
    <name type="ordered locus">Nwi_0121</name>
</gene>
<sequence>MRERTSRRIMQRFTIHDLAAIIDARAASGGDASYTRKLLDKGPAHCARKLGEEAVETIIAAVEKDRHHLIAEGADLMFHFLVLLKASGVTLQDVEAVLAQRTAISGLEEKAARNRD</sequence>
<name>HIS2_NITWN</name>
<protein>
    <recommendedName>
        <fullName evidence="1">Phosphoribosyl-ATP pyrophosphatase</fullName>
        <shortName evidence="1">PRA-PH</shortName>
        <ecNumber evidence="1">3.6.1.31</ecNumber>
    </recommendedName>
</protein>
<feature type="chain" id="PRO_0000230180" description="Phosphoribosyl-ATP pyrophosphatase">
    <location>
        <begin position="1"/>
        <end position="116"/>
    </location>
</feature>
<proteinExistence type="inferred from homology"/>
<comment type="catalytic activity">
    <reaction evidence="1">
        <text>1-(5-phospho-beta-D-ribosyl)-ATP + H2O = 1-(5-phospho-beta-D-ribosyl)-5'-AMP + diphosphate + H(+)</text>
        <dbReference type="Rhea" id="RHEA:22828"/>
        <dbReference type="ChEBI" id="CHEBI:15377"/>
        <dbReference type="ChEBI" id="CHEBI:15378"/>
        <dbReference type="ChEBI" id="CHEBI:33019"/>
        <dbReference type="ChEBI" id="CHEBI:59457"/>
        <dbReference type="ChEBI" id="CHEBI:73183"/>
        <dbReference type="EC" id="3.6.1.31"/>
    </reaction>
</comment>
<comment type="pathway">
    <text evidence="1">Amino-acid biosynthesis; L-histidine biosynthesis; L-histidine from 5-phospho-alpha-D-ribose 1-diphosphate: step 2/9.</text>
</comment>
<comment type="subcellular location">
    <subcellularLocation>
        <location evidence="1">Cytoplasm</location>
    </subcellularLocation>
</comment>
<comment type="similarity">
    <text evidence="1">Belongs to the PRA-PH family.</text>
</comment>
<evidence type="ECO:0000255" key="1">
    <source>
        <dbReference type="HAMAP-Rule" id="MF_01020"/>
    </source>
</evidence>
<keyword id="KW-0028">Amino-acid biosynthesis</keyword>
<keyword id="KW-0067">ATP-binding</keyword>
<keyword id="KW-0963">Cytoplasm</keyword>
<keyword id="KW-0368">Histidine biosynthesis</keyword>
<keyword id="KW-0378">Hydrolase</keyword>
<keyword id="KW-0547">Nucleotide-binding</keyword>
<keyword id="KW-1185">Reference proteome</keyword>
<organism>
    <name type="scientific">Nitrobacter winogradskyi (strain ATCC 25391 / DSM 10237 / CIP 104748 / NCIMB 11846 / Nb-255)</name>
    <dbReference type="NCBI Taxonomy" id="323098"/>
    <lineage>
        <taxon>Bacteria</taxon>
        <taxon>Pseudomonadati</taxon>
        <taxon>Pseudomonadota</taxon>
        <taxon>Alphaproteobacteria</taxon>
        <taxon>Hyphomicrobiales</taxon>
        <taxon>Nitrobacteraceae</taxon>
        <taxon>Nitrobacter</taxon>
    </lineage>
</organism>
<dbReference type="EC" id="3.6.1.31" evidence="1"/>
<dbReference type="EMBL" id="CP000115">
    <property type="protein sequence ID" value="ABA03389.1"/>
    <property type="molecule type" value="Genomic_DNA"/>
</dbReference>
<dbReference type="SMR" id="Q3SWF2"/>
<dbReference type="STRING" id="323098.Nwi_0121"/>
<dbReference type="KEGG" id="nwi:Nwi_0121"/>
<dbReference type="eggNOG" id="COG0140">
    <property type="taxonomic scope" value="Bacteria"/>
</dbReference>
<dbReference type="HOGENOM" id="CLU_123337_1_1_5"/>
<dbReference type="UniPathway" id="UPA00031">
    <property type="reaction ID" value="UER00007"/>
</dbReference>
<dbReference type="Proteomes" id="UP000002531">
    <property type="component" value="Chromosome"/>
</dbReference>
<dbReference type="GO" id="GO:0005737">
    <property type="term" value="C:cytoplasm"/>
    <property type="evidence" value="ECO:0007669"/>
    <property type="project" value="UniProtKB-SubCell"/>
</dbReference>
<dbReference type="GO" id="GO:0005524">
    <property type="term" value="F:ATP binding"/>
    <property type="evidence" value="ECO:0007669"/>
    <property type="project" value="UniProtKB-KW"/>
</dbReference>
<dbReference type="GO" id="GO:0004636">
    <property type="term" value="F:phosphoribosyl-ATP diphosphatase activity"/>
    <property type="evidence" value="ECO:0007669"/>
    <property type="project" value="UniProtKB-UniRule"/>
</dbReference>
<dbReference type="GO" id="GO:0000105">
    <property type="term" value="P:L-histidine biosynthetic process"/>
    <property type="evidence" value="ECO:0007669"/>
    <property type="project" value="UniProtKB-UniRule"/>
</dbReference>
<dbReference type="CDD" id="cd11534">
    <property type="entry name" value="NTP-PPase_HisIE_like"/>
    <property type="match status" value="1"/>
</dbReference>
<dbReference type="Gene3D" id="1.10.287.1080">
    <property type="entry name" value="MazG-like"/>
    <property type="match status" value="1"/>
</dbReference>
<dbReference type="HAMAP" id="MF_01020">
    <property type="entry name" value="HisE"/>
    <property type="match status" value="1"/>
</dbReference>
<dbReference type="InterPro" id="IPR008179">
    <property type="entry name" value="HisE"/>
</dbReference>
<dbReference type="InterPro" id="IPR021130">
    <property type="entry name" value="PRib-ATP_PPHydrolase-like"/>
</dbReference>
<dbReference type="NCBIfam" id="TIGR03188">
    <property type="entry name" value="histidine_hisI"/>
    <property type="match status" value="1"/>
</dbReference>
<dbReference type="NCBIfam" id="NF001613">
    <property type="entry name" value="PRK00400.1-5"/>
    <property type="match status" value="1"/>
</dbReference>
<dbReference type="PANTHER" id="PTHR42945">
    <property type="entry name" value="HISTIDINE BIOSYNTHESIS BIFUNCTIONAL PROTEIN"/>
    <property type="match status" value="1"/>
</dbReference>
<dbReference type="PANTHER" id="PTHR42945:SF1">
    <property type="entry name" value="HISTIDINE BIOSYNTHESIS BIFUNCTIONAL PROTEIN HIS7"/>
    <property type="match status" value="1"/>
</dbReference>
<dbReference type="Pfam" id="PF01503">
    <property type="entry name" value="PRA-PH"/>
    <property type="match status" value="1"/>
</dbReference>
<dbReference type="SUPFAM" id="SSF101386">
    <property type="entry name" value="all-alpha NTP pyrophosphatases"/>
    <property type="match status" value="1"/>
</dbReference>
<reference key="1">
    <citation type="journal article" date="2006" name="Appl. Environ. Microbiol.">
        <title>Genome sequence of the chemolithoautotrophic nitrite-oxidizing bacterium Nitrobacter winogradskyi Nb-255.</title>
        <authorList>
            <person name="Starkenburg S.R."/>
            <person name="Chain P.S.G."/>
            <person name="Sayavedra-Soto L.A."/>
            <person name="Hauser L."/>
            <person name="Land M.L."/>
            <person name="Larimer F.W."/>
            <person name="Malfatti S.A."/>
            <person name="Klotz M.G."/>
            <person name="Bottomley P.J."/>
            <person name="Arp D.J."/>
            <person name="Hickey W.J."/>
        </authorList>
    </citation>
    <scope>NUCLEOTIDE SEQUENCE [LARGE SCALE GENOMIC DNA]</scope>
    <source>
        <strain>ATCC 25391 / DSM 10237 / CIP 104748 / NCIMB 11846 / Nb-255</strain>
    </source>
</reference>